<sequence length="176" mass="20030">METQRASLSLGRCSLWLLLLGLVLPSASAQALSYREAVLRAVDQFNERSSEANLYRLLELDPTPNDDLDPGTRKPVSFRVKETDCPRTSQQPLEQCDFKENGLVKQCVGTVTLDPSNDQFDINCNELQSVRFRPPIRRPPIRPPFYPPFRPPIRPPIFPPIRPPFRPPLGPFPGRR</sequence>
<gene>
    <name type="primary">CATHL2</name>
    <name type="synonym">BAC5</name>
</gene>
<reference key="1">
    <citation type="journal article" date="1993" name="J. Biol. Chem.">
        <title>The cDNA of the neutrophil antibiotic Bac5 predicts a pro-sequence homologous to a cysteine proteinase inhibitor that is common to other neutrophil antibiotics.</title>
        <authorList>
            <person name="Zanetti M."/>
            <person name="del Sal G."/>
            <person name="Storici P."/>
            <person name="Schneider C."/>
            <person name="Romeo D."/>
        </authorList>
    </citation>
    <scope>NUCLEOTIDE SEQUENCE [MRNA]</scope>
    <source>
        <tissue>Neutrophil</tissue>
    </source>
</reference>
<reference key="2">
    <citation type="submission" date="2006-08" db="EMBL/GenBank/DDBJ databases">
        <authorList>
            <consortium name="NIH - Mammalian Gene Collection (MGC) project"/>
        </authorList>
    </citation>
    <scope>NUCLEOTIDE SEQUENCE [LARGE SCALE MRNA]</scope>
    <source>
        <strain>Hereford</strain>
        <tissue>Hypothalamus</tissue>
    </source>
</reference>
<reference key="3">
    <citation type="journal article" date="2009" name="J. Hered.">
        <title>Sequence analysis and polymorphism discovery in 4 members of the bovine cathelicidin gene family.</title>
        <authorList>
            <person name="Gillenwaters E.N."/>
            <person name="Seabury C.M."/>
            <person name="Elliott J.S."/>
            <person name="Womack J.E."/>
        </authorList>
    </citation>
    <scope>NUCLEOTIDE SEQUENCE [GENOMIC DNA] OF 1-159</scope>
    <source>
        <strain>Isolate 44N</strain>
        <strain>Isolate 74S</strain>
        <strain>Isolate 80U</strain>
        <strain>Isolate JEW38</strain>
    </source>
</reference>
<reference key="4">
    <citation type="journal article" date="1990" name="J. Biol. Chem.">
        <title>Amino acid sequences of two proline-rich bactenecins. Antimicrobial peptides of bovine neutrophils.</title>
        <authorList>
            <person name="Frank R.W."/>
            <person name="Gennaro R."/>
            <person name="Schneider K."/>
            <person name="Przybylski M."/>
            <person name="Romeo D."/>
        </authorList>
    </citation>
    <scope>PROTEIN SEQUENCE OF 131-173</scope>
    <scope>IDENTIFICATION BY MASS SPECTROMETRY</scope>
    <source>
        <tissue>Neutrophil</tissue>
    </source>
</reference>
<reference key="5">
    <citation type="journal article" date="1996" name="Biochemistry">
        <title>Delineation of an active fragment and poly(L-proline) II conformation for candidacidal activity of bactenecin 5.</title>
        <authorList>
            <person name="Raj P.A."/>
            <person name="Marcus E."/>
            <person name="Edgerton M."/>
        </authorList>
    </citation>
    <scope>STRUCTURE BY NMR OF 131-173</scope>
    <scope>AMIDATION AT PRO-173</scope>
</reference>
<reference key="6">
    <citation type="journal article" date="1996" name="Eur. J. Biochem.">
        <title>Purification and structural characterization of bovine cathelicidins, precursors of antimicrobial peptides.</title>
        <authorList>
            <person name="Storici P."/>
            <person name="Tossi A."/>
            <person name="Lenarcic B."/>
            <person name="Romeo D."/>
        </authorList>
    </citation>
    <scope>CHARACTERIZATION</scope>
    <scope>PYROGLUTAMATE FORMATION AT GLN-30</scope>
</reference>
<protein>
    <recommendedName>
        <fullName>Cathelicidin-2</fullName>
    </recommendedName>
    <alternativeName>
        <fullName>Bactenecin-5</fullName>
        <shortName>Bac5</shortName>
    </alternativeName>
    <alternativeName>
        <fullName>PR-42</fullName>
    </alternativeName>
</protein>
<dbReference type="EMBL" id="L02650">
    <property type="protein sequence ID" value="AAA30404.1"/>
    <property type="molecule type" value="mRNA"/>
</dbReference>
<dbReference type="EMBL" id="EU380691">
    <property type="protein sequence ID" value="ACC61269.1"/>
    <property type="molecule type" value="Genomic_DNA"/>
</dbReference>
<dbReference type="EMBL" id="EU380692">
    <property type="protein sequence ID" value="ACC61270.1"/>
    <property type="molecule type" value="Genomic_DNA"/>
</dbReference>
<dbReference type="EMBL" id="EU380693">
    <property type="protein sequence ID" value="ACC61271.1"/>
    <property type="molecule type" value="Genomic_DNA"/>
</dbReference>
<dbReference type="EMBL" id="EU380697">
    <property type="protein sequence ID" value="ACC61275.1"/>
    <property type="molecule type" value="Genomic_DNA"/>
</dbReference>
<dbReference type="EMBL" id="BC120477">
    <property type="protein sequence ID" value="AAI20478.1"/>
    <property type="molecule type" value="mRNA"/>
</dbReference>
<dbReference type="PIR" id="A45328">
    <property type="entry name" value="A45328"/>
</dbReference>
<dbReference type="RefSeq" id="NP_777251.1">
    <property type="nucleotide sequence ID" value="NM_174826.3"/>
</dbReference>
<dbReference type="SMR" id="P19660"/>
<dbReference type="FunCoup" id="P19660">
    <property type="interactions" value="180"/>
</dbReference>
<dbReference type="STRING" id="9913.ENSBTAP00000034497"/>
<dbReference type="PaxDb" id="9913-ENSBTAP00000034497"/>
<dbReference type="PeptideAtlas" id="P19660"/>
<dbReference type="Ensembl" id="ENSBTAT00000034609.5">
    <property type="protein sequence ID" value="ENSBTAP00000034497.3"/>
    <property type="gene ID" value="ENSBTAG00000024852.5"/>
</dbReference>
<dbReference type="GeneID" id="282165"/>
<dbReference type="KEGG" id="bta:282165"/>
<dbReference type="CTD" id="282165"/>
<dbReference type="VEuPathDB" id="HostDB:ENSBTAG00000024852"/>
<dbReference type="eggNOG" id="ENOG502SAES">
    <property type="taxonomic scope" value="Eukaryota"/>
</dbReference>
<dbReference type="GeneTree" id="ENSGT00390000000410"/>
<dbReference type="HOGENOM" id="CLU_121724_0_0_1"/>
<dbReference type="InParanoid" id="P19660"/>
<dbReference type="OMA" id="VMAEECE"/>
<dbReference type="OrthoDB" id="9930485at2759"/>
<dbReference type="TreeFam" id="TF338457"/>
<dbReference type="Proteomes" id="UP000009136">
    <property type="component" value="Chromosome 22"/>
</dbReference>
<dbReference type="Bgee" id="ENSBTAG00000024852">
    <property type="expression patterns" value="Expressed in thymus and 35 other cell types or tissues"/>
</dbReference>
<dbReference type="GO" id="GO:0005615">
    <property type="term" value="C:extracellular space"/>
    <property type="evidence" value="ECO:0000318"/>
    <property type="project" value="GO_Central"/>
</dbReference>
<dbReference type="GO" id="GO:0001530">
    <property type="term" value="F:lipopolysaccharide binding"/>
    <property type="evidence" value="ECO:0000318"/>
    <property type="project" value="GO_Central"/>
</dbReference>
<dbReference type="GO" id="GO:0061844">
    <property type="term" value="P:antimicrobial humoral immune response mediated by antimicrobial peptide"/>
    <property type="evidence" value="ECO:0000318"/>
    <property type="project" value="GO_Central"/>
</dbReference>
<dbReference type="GO" id="GO:0050829">
    <property type="term" value="P:defense response to Gram-negative bacterium"/>
    <property type="evidence" value="ECO:0000318"/>
    <property type="project" value="GO_Central"/>
</dbReference>
<dbReference type="GO" id="GO:0050830">
    <property type="term" value="P:defense response to Gram-positive bacterium"/>
    <property type="evidence" value="ECO:0000318"/>
    <property type="project" value="GO_Central"/>
</dbReference>
<dbReference type="GO" id="GO:0045087">
    <property type="term" value="P:innate immune response"/>
    <property type="evidence" value="ECO:0000318"/>
    <property type="project" value="GO_Central"/>
</dbReference>
<dbReference type="FunFam" id="3.10.450.10:FF:000003">
    <property type="entry name" value="Cathelicidin antimicrobial peptide"/>
    <property type="match status" value="1"/>
</dbReference>
<dbReference type="Gene3D" id="3.10.450.10">
    <property type="match status" value="1"/>
</dbReference>
<dbReference type="InterPro" id="IPR001894">
    <property type="entry name" value="Cathelicidin-like"/>
</dbReference>
<dbReference type="InterPro" id="IPR018216">
    <property type="entry name" value="Cathelicidin_CS"/>
</dbReference>
<dbReference type="InterPro" id="IPR046350">
    <property type="entry name" value="Cystatin_sf"/>
</dbReference>
<dbReference type="PANTHER" id="PTHR10206">
    <property type="entry name" value="CATHELICIDIN"/>
    <property type="match status" value="1"/>
</dbReference>
<dbReference type="PANTHER" id="PTHR10206:SF2">
    <property type="entry name" value="CATHELICIDIN ANTIMICROBIAL PEPTIDE"/>
    <property type="match status" value="1"/>
</dbReference>
<dbReference type="Pfam" id="PF00666">
    <property type="entry name" value="Cathelicidins"/>
    <property type="match status" value="1"/>
</dbReference>
<dbReference type="SUPFAM" id="SSF54403">
    <property type="entry name" value="Cystatin/monellin"/>
    <property type="match status" value="1"/>
</dbReference>
<dbReference type="PROSITE" id="PS00946">
    <property type="entry name" value="CATHELICIDINS_1"/>
    <property type="match status" value="1"/>
</dbReference>
<dbReference type="PROSITE" id="PS00947">
    <property type="entry name" value="CATHELICIDINS_2"/>
    <property type="match status" value="1"/>
</dbReference>
<evidence type="ECO:0000250" key="1"/>
<evidence type="ECO:0000255" key="2"/>
<evidence type="ECO:0000256" key="3">
    <source>
        <dbReference type="SAM" id="MobiDB-lite"/>
    </source>
</evidence>
<evidence type="ECO:0000269" key="4">
    <source>
    </source>
</evidence>
<evidence type="ECO:0000269" key="5">
    <source>
    </source>
</evidence>
<evidence type="ECO:0000269" key="6">
    <source>
    </source>
</evidence>
<evidence type="ECO:0000305" key="7"/>
<accession>P19660</accession>
<accession>B9TUB9</accession>
<accession>Q0P560</accession>
<feature type="signal peptide" evidence="2">
    <location>
        <begin position="1"/>
        <end position="29"/>
    </location>
</feature>
<feature type="propeptide" id="PRO_0000004700" evidence="4">
    <location>
        <begin position="30"/>
        <end position="130"/>
    </location>
</feature>
<feature type="peptide" id="PRO_0000004701" description="Cathelicidin-2">
    <location>
        <begin position="131"/>
        <end position="173"/>
    </location>
</feature>
<feature type="propeptide" id="PRO_0000004702" description="Removed in mature form">
    <location>
        <begin position="174"/>
        <end position="176"/>
    </location>
</feature>
<feature type="region of interest" description="Disordered" evidence="3">
    <location>
        <begin position="157"/>
        <end position="176"/>
    </location>
</feature>
<feature type="modified residue" description="Pyrrolidone carboxylic acid" evidence="6">
    <location>
        <position position="30"/>
    </location>
</feature>
<feature type="modified residue" description="Proline amide" evidence="5">
    <location>
        <position position="173"/>
    </location>
</feature>
<feature type="disulfide bond" evidence="1">
    <location>
        <begin position="85"/>
        <end position="96"/>
    </location>
</feature>
<feature type="disulfide bond" evidence="1">
    <location>
        <begin position="107"/>
        <end position="124"/>
    </location>
</feature>
<feature type="sequence conflict" description="In Ref. 4; AA sequence." evidence="7" ref="4">
    <original>GP</original>
    <variation>R</variation>
    <location>
        <begin position="170"/>
        <end position="171"/>
    </location>
</feature>
<comment type="function">
    <text>Exerts, in vitro, a potent antimicrobial activity. Probably due to an impairment of the function of the respiratory chain and of energy-dependent activities in the inner membrane of susceptible microorganisms.</text>
</comment>
<comment type="subcellular location">
    <subcellularLocation>
        <location>Secreted</location>
    </subcellularLocation>
</comment>
<comment type="tissue specificity">
    <text>Large granules of neutrophils.</text>
</comment>
<comment type="domain">
    <text>BAC5 sequence consists almost exclusively of X-P-P-Y repeats.</text>
</comment>
<comment type="PTM">
    <text>Elastase is responsible for its maturation.</text>
</comment>
<comment type="similarity">
    <text evidence="7">Belongs to the cathelicidin family.</text>
</comment>
<organism>
    <name type="scientific">Bos taurus</name>
    <name type="common">Bovine</name>
    <dbReference type="NCBI Taxonomy" id="9913"/>
    <lineage>
        <taxon>Eukaryota</taxon>
        <taxon>Metazoa</taxon>
        <taxon>Chordata</taxon>
        <taxon>Craniata</taxon>
        <taxon>Vertebrata</taxon>
        <taxon>Euteleostomi</taxon>
        <taxon>Mammalia</taxon>
        <taxon>Eutheria</taxon>
        <taxon>Laurasiatheria</taxon>
        <taxon>Artiodactyla</taxon>
        <taxon>Ruminantia</taxon>
        <taxon>Pecora</taxon>
        <taxon>Bovidae</taxon>
        <taxon>Bovinae</taxon>
        <taxon>Bos</taxon>
    </lineage>
</organism>
<proteinExistence type="evidence at protein level"/>
<name>CTHL2_BOVIN</name>
<keyword id="KW-0027">Amidation</keyword>
<keyword id="KW-0044">Antibiotic</keyword>
<keyword id="KW-0929">Antimicrobial</keyword>
<keyword id="KW-0903">Direct protein sequencing</keyword>
<keyword id="KW-1015">Disulfide bond</keyword>
<keyword id="KW-0873">Pyrrolidone carboxylic acid</keyword>
<keyword id="KW-1185">Reference proteome</keyword>
<keyword id="KW-0677">Repeat</keyword>
<keyword id="KW-0964">Secreted</keyword>
<keyword id="KW-0732">Signal</keyword>